<comment type="function">
    <text evidence="1">Specifically methylates the uridine in position 2552 of 23S rRNA at the 2'-O position of the ribose in the fully assembled 50S ribosomal subunit.</text>
</comment>
<comment type="catalytic activity">
    <reaction evidence="1">
        <text>uridine(2552) in 23S rRNA + S-adenosyl-L-methionine = 2'-O-methyluridine(2552) in 23S rRNA + S-adenosyl-L-homocysteine + H(+)</text>
        <dbReference type="Rhea" id="RHEA:42720"/>
        <dbReference type="Rhea" id="RHEA-COMP:10202"/>
        <dbReference type="Rhea" id="RHEA-COMP:10203"/>
        <dbReference type="ChEBI" id="CHEBI:15378"/>
        <dbReference type="ChEBI" id="CHEBI:57856"/>
        <dbReference type="ChEBI" id="CHEBI:59789"/>
        <dbReference type="ChEBI" id="CHEBI:65315"/>
        <dbReference type="ChEBI" id="CHEBI:74478"/>
        <dbReference type="EC" id="2.1.1.166"/>
    </reaction>
</comment>
<comment type="subcellular location">
    <subcellularLocation>
        <location evidence="1">Cytoplasm</location>
    </subcellularLocation>
</comment>
<comment type="similarity">
    <text evidence="1">Belongs to the class I-like SAM-binding methyltransferase superfamily. RNA methyltransferase RlmE family.</text>
</comment>
<dbReference type="EC" id="2.1.1.166" evidence="1"/>
<dbReference type="EMBL" id="CP001013">
    <property type="protein sequence ID" value="ACB35083.1"/>
    <property type="molecule type" value="Genomic_DNA"/>
</dbReference>
<dbReference type="RefSeq" id="WP_012347837.1">
    <property type="nucleotide sequence ID" value="NC_010524.1"/>
</dbReference>
<dbReference type="SMR" id="B1XXG3"/>
<dbReference type="STRING" id="395495.Lcho_2818"/>
<dbReference type="KEGG" id="lch:Lcho_2818"/>
<dbReference type="eggNOG" id="COG0293">
    <property type="taxonomic scope" value="Bacteria"/>
</dbReference>
<dbReference type="HOGENOM" id="CLU_009422_4_1_4"/>
<dbReference type="OrthoDB" id="9790080at2"/>
<dbReference type="Proteomes" id="UP000001693">
    <property type="component" value="Chromosome"/>
</dbReference>
<dbReference type="GO" id="GO:0005737">
    <property type="term" value="C:cytoplasm"/>
    <property type="evidence" value="ECO:0007669"/>
    <property type="project" value="UniProtKB-SubCell"/>
</dbReference>
<dbReference type="GO" id="GO:0008650">
    <property type="term" value="F:rRNA (uridine-2'-O-)-methyltransferase activity"/>
    <property type="evidence" value="ECO:0007669"/>
    <property type="project" value="UniProtKB-UniRule"/>
</dbReference>
<dbReference type="FunFam" id="3.40.50.150:FF:000005">
    <property type="entry name" value="Ribosomal RNA large subunit methyltransferase E"/>
    <property type="match status" value="1"/>
</dbReference>
<dbReference type="Gene3D" id="3.40.50.150">
    <property type="entry name" value="Vaccinia Virus protein VP39"/>
    <property type="match status" value="1"/>
</dbReference>
<dbReference type="HAMAP" id="MF_01547">
    <property type="entry name" value="RNA_methyltr_E"/>
    <property type="match status" value="1"/>
</dbReference>
<dbReference type="InterPro" id="IPR050082">
    <property type="entry name" value="RNA_methyltr_RlmE"/>
</dbReference>
<dbReference type="InterPro" id="IPR002877">
    <property type="entry name" value="RNA_MeTrfase_FtsJ_dom"/>
</dbReference>
<dbReference type="InterPro" id="IPR015507">
    <property type="entry name" value="rRNA-MeTfrase_E"/>
</dbReference>
<dbReference type="InterPro" id="IPR029063">
    <property type="entry name" value="SAM-dependent_MTases_sf"/>
</dbReference>
<dbReference type="PANTHER" id="PTHR10920">
    <property type="entry name" value="RIBOSOMAL RNA METHYLTRANSFERASE"/>
    <property type="match status" value="1"/>
</dbReference>
<dbReference type="PANTHER" id="PTHR10920:SF18">
    <property type="entry name" value="RRNA METHYLTRANSFERASE 2, MITOCHONDRIAL"/>
    <property type="match status" value="1"/>
</dbReference>
<dbReference type="Pfam" id="PF01728">
    <property type="entry name" value="FtsJ"/>
    <property type="match status" value="1"/>
</dbReference>
<dbReference type="PIRSF" id="PIRSF005461">
    <property type="entry name" value="23S_rRNA_mtase"/>
    <property type="match status" value="1"/>
</dbReference>
<dbReference type="SUPFAM" id="SSF53335">
    <property type="entry name" value="S-adenosyl-L-methionine-dependent methyltransferases"/>
    <property type="match status" value="1"/>
</dbReference>
<organism>
    <name type="scientific">Leptothrix cholodnii (strain ATCC 51168 / LMG 8142 / SP-6)</name>
    <name type="common">Leptothrix discophora (strain SP-6)</name>
    <dbReference type="NCBI Taxonomy" id="395495"/>
    <lineage>
        <taxon>Bacteria</taxon>
        <taxon>Pseudomonadati</taxon>
        <taxon>Pseudomonadota</taxon>
        <taxon>Betaproteobacteria</taxon>
        <taxon>Burkholderiales</taxon>
        <taxon>Sphaerotilaceae</taxon>
        <taxon>Leptothrix</taxon>
    </lineage>
</organism>
<reference key="1">
    <citation type="submission" date="2008-03" db="EMBL/GenBank/DDBJ databases">
        <title>Complete sequence of Leptothrix cholodnii SP-6.</title>
        <authorList>
            <consortium name="US DOE Joint Genome Institute"/>
            <person name="Copeland A."/>
            <person name="Lucas S."/>
            <person name="Lapidus A."/>
            <person name="Glavina del Rio T."/>
            <person name="Dalin E."/>
            <person name="Tice H."/>
            <person name="Bruce D."/>
            <person name="Goodwin L."/>
            <person name="Pitluck S."/>
            <person name="Chertkov O."/>
            <person name="Brettin T."/>
            <person name="Detter J.C."/>
            <person name="Han C."/>
            <person name="Kuske C.R."/>
            <person name="Schmutz J."/>
            <person name="Larimer F."/>
            <person name="Land M."/>
            <person name="Hauser L."/>
            <person name="Kyrpides N."/>
            <person name="Lykidis A."/>
            <person name="Emerson D."/>
            <person name="Richardson P."/>
        </authorList>
    </citation>
    <scope>NUCLEOTIDE SEQUENCE [LARGE SCALE GENOMIC DNA]</scope>
    <source>
        <strain>ATCC 51168 / LMG 8142 / SP-6</strain>
    </source>
</reference>
<protein>
    <recommendedName>
        <fullName evidence="1">Ribosomal RNA large subunit methyltransferase E</fullName>
        <ecNumber evidence="1">2.1.1.166</ecNumber>
    </recommendedName>
    <alternativeName>
        <fullName evidence="1">23S rRNA Um2552 methyltransferase</fullName>
    </alternativeName>
    <alternativeName>
        <fullName evidence="1">rRNA (uridine-2'-O-)-methyltransferase</fullName>
    </alternativeName>
</protein>
<name>RLME_LEPCP</name>
<gene>
    <name evidence="1" type="primary">rlmE</name>
    <name evidence="1" type="synonym">ftsJ</name>
    <name evidence="1" type="synonym">rrmJ</name>
    <name type="ordered locus">Lcho_2818</name>
</gene>
<proteinExistence type="inferred from homology"/>
<evidence type="ECO:0000255" key="1">
    <source>
        <dbReference type="HAMAP-Rule" id="MF_01547"/>
    </source>
</evidence>
<keyword id="KW-0963">Cytoplasm</keyword>
<keyword id="KW-0489">Methyltransferase</keyword>
<keyword id="KW-1185">Reference proteome</keyword>
<keyword id="KW-0698">rRNA processing</keyword>
<keyword id="KW-0949">S-adenosyl-L-methionine</keyword>
<keyword id="KW-0808">Transferase</keyword>
<accession>B1XXG3</accession>
<feature type="chain" id="PRO_1000195002" description="Ribosomal RNA large subunit methyltransferase E">
    <location>
        <begin position="1"/>
        <end position="232"/>
    </location>
</feature>
<feature type="active site" description="Proton acceptor" evidence="1">
    <location>
        <position position="178"/>
    </location>
</feature>
<feature type="binding site" evidence="1">
    <location>
        <position position="64"/>
    </location>
    <ligand>
        <name>S-adenosyl-L-methionine</name>
        <dbReference type="ChEBI" id="CHEBI:59789"/>
    </ligand>
</feature>
<feature type="binding site" evidence="1">
    <location>
        <position position="66"/>
    </location>
    <ligand>
        <name>S-adenosyl-L-methionine</name>
        <dbReference type="ChEBI" id="CHEBI:59789"/>
    </ligand>
</feature>
<feature type="binding site" evidence="1">
    <location>
        <position position="97"/>
    </location>
    <ligand>
        <name>S-adenosyl-L-methionine</name>
        <dbReference type="ChEBI" id="CHEBI:59789"/>
    </ligand>
</feature>
<feature type="binding site" evidence="1">
    <location>
        <position position="113"/>
    </location>
    <ligand>
        <name>S-adenosyl-L-methionine</name>
        <dbReference type="ChEBI" id="CHEBI:59789"/>
    </ligand>
</feature>
<feature type="binding site" evidence="1">
    <location>
        <position position="138"/>
    </location>
    <ligand>
        <name>S-adenosyl-L-methionine</name>
        <dbReference type="ChEBI" id="CHEBI:59789"/>
    </ligand>
</feature>
<sequence length="232" mass="25130">MKINTKSKKVNKAWFNDHIHDTYVKLAHKEGYRSRAAYKIKEIDETCGLIRPGQVVVDLGAVPGAWSQYVRRRFAPREAGVGGAAAGELNGRIIALDLLPFEPLEGVAFLQGDFCEEAVLAQLVGLLDGRAVDVVLSDMAPNLSGVEVTDAARIANLVELALEFAQSHLKPQGALVCKVFHGSGYSQLVDQFKRTFRVVKAVKPKASRDRSAETFLVGIGLKSTGMPNADAV</sequence>